<organism>
    <name type="scientific">Xanthomonas campestris pv. campestris (strain 8004)</name>
    <dbReference type="NCBI Taxonomy" id="314565"/>
    <lineage>
        <taxon>Bacteria</taxon>
        <taxon>Pseudomonadati</taxon>
        <taxon>Pseudomonadota</taxon>
        <taxon>Gammaproteobacteria</taxon>
        <taxon>Lysobacterales</taxon>
        <taxon>Lysobacteraceae</taxon>
        <taxon>Xanthomonas</taxon>
    </lineage>
</organism>
<dbReference type="EMBL" id="CP000050">
    <property type="protein sequence ID" value="AAY50138.1"/>
    <property type="molecule type" value="Genomic_DNA"/>
</dbReference>
<dbReference type="RefSeq" id="WP_011036349.1">
    <property type="nucleotide sequence ID" value="NZ_CP155948.1"/>
</dbReference>
<dbReference type="SMR" id="Q4US35"/>
<dbReference type="GeneID" id="58014265"/>
<dbReference type="KEGG" id="xcb:XC_3092"/>
<dbReference type="HOGENOM" id="CLU_095424_4_0_6"/>
<dbReference type="Proteomes" id="UP000000420">
    <property type="component" value="Chromosome"/>
</dbReference>
<dbReference type="GO" id="GO:0022625">
    <property type="term" value="C:cytosolic large ribosomal subunit"/>
    <property type="evidence" value="ECO:0007669"/>
    <property type="project" value="TreeGrafter"/>
</dbReference>
<dbReference type="GO" id="GO:0003735">
    <property type="term" value="F:structural constituent of ribosome"/>
    <property type="evidence" value="ECO:0007669"/>
    <property type="project" value="InterPro"/>
</dbReference>
<dbReference type="GO" id="GO:0006412">
    <property type="term" value="P:translation"/>
    <property type="evidence" value="ECO:0007669"/>
    <property type="project" value="UniProtKB-UniRule"/>
</dbReference>
<dbReference type="FunFam" id="2.40.50.100:FF:000001">
    <property type="entry name" value="50S ribosomal protein L27"/>
    <property type="match status" value="1"/>
</dbReference>
<dbReference type="Gene3D" id="2.40.50.100">
    <property type="match status" value="1"/>
</dbReference>
<dbReference type="HAMAP" id="MF_00539">
    <property type="entry name" value="Ribosomal_bL27"/>
    <property type="match status" value="1"/>
</dbReference>
<dbReference type="InterPro" id="IPR001684">
    <property type="entry name" value="Ribosomal_bL27"/>
</dbReference>
<dbReference type="InterPro" id="IPR018261">
    <property type="entry name" value="Ribosomal_bL27_CS"/>
</dbReference>
<dbReference type="NCBIfam" id="TIGR00062">
    <property type="entry name" value="L27"/>
    <property type="match status" value="1"/>
</dbReference>
<dbReference type="PANTHER" id="PTHR15893:SF0">
    <property type="entry name" value="LARGE RIBOSOMAL SUBUNIT PROTEIN BL27M"/>
    <property type="match status" value="1"/>
</dbReference>
<dbReference type="PANTHER" id="PTHR15893">
    <property type="entry name" value="RIBOSOMAL PROTEIN L27"/>
    <property type="match status" value="1"/>
</dbReference>
<dbReference type="Pfam" id="PF01016">
    <property type="entry name" value="Ribosomal_L27"/>
    <property type="match status" value="1"/>
</dbReference>
<dbReference type="PRINTS" id="PR00063">
    <property type="entry name" value="RIBOSOMALL27"/>
</dbReference>
<dbReference type="SUPFAM" id="SSF110324">
    <property type="entry name" value="Ribosomal L27 protein-like"/>
    <property type="match status" value="1"/>
</dbReference>
<dbReference type="PROSITE" id="PS00831">
    <property type="entry name" value="RIBOSOMAL_L27"/>
    <property type="match status" value="1"/>
</dbReference>
<sequence>MAHKKGVGSSRNGRDSNPKYLGVKIFGGQAIDAGNIIVRQRGTQFHPGAGVGLGRDHTLFALVNGKVEFTTKGPKKRRTVSVVAEA</sequence>
<name>RL27_XANC8</name>
<reference key="1">
    <citation type="journal article" date="2005" name="Genome Res.">
        <title>Comparative and functional genomic analyses of the pathogenicity of phytopathogen Xanthomonas campestris pv. campestris.</title>
        <authorList>
            <person name="Qian W."/>
            <person name="Jia Y."/>
            <person name="Ren S.-X."/>
            <person name="He Y.-Q."/>
            <person name="Feng J.-X."/>
            <person name="Lu L.-F."/>
            <person name="Sun Q."/>
            <person name="Ying G."/>
            <person name="Tang D.-J."/>
            <person name="Tang H."/>
            <person name="Wu W."/>
            <person name="Hao P."/>
            <person name="Wang L."/>
            <person name="Jiang B.-L."/>
            <person name="Zeng S."/>
            <person name="Gu W.-Y."/>
            <person name="Lu G."/>
            <person name="Rong L."/>
            <person name="Tian Y."/>
            <person name="Yao Z."/>
            <person name="Fu G."/>
            <person name="Chen B."/>
            <person name="Fang R."/>
            <person name="Qiang B."/>
            <person name="Chen Z."/>
            <person name="Zhao G.-P."/>
            <person name="Tang J.-L."/>
            <person name="He C."/>
        </authorList>
    </citation>
    <scope>NUCLEOTIDE SEQUENCE [LARGE SCALE GENOMIC DNA]</scope>
    <source>
        <strain>8004</strain>
    </source>
</reference>
<proteinExistence type="inferred from homology"/>
<comment type="similarity">
    <text evidence="1">Belongs to the bacterial ribosomal protein bL27 family.</text>
</comment>
<evidence type="ECO:0000255" key="1">
    <source>
        <dbReference type="HAMAP-Rule" id="MF_00539"/>
    </source>
</evidence>
<evidence type="ECO:0000305" key="2"/>
<accession>Q4US35</accession>
<protein>
    <recommendedName>
        <fullName evidence="1">Large ribosomal subunit protein bL27</fullName>
    </recommendedName>
    <alternativeName>
        <fullName evidence="2">50S ribosomal protein L27</fullName>
    </alternativeName>
</protein>
<feature type="chain" id="PRO_1000017647" description="Large ribosomal subunit protein bL27">
    <location>
        <begin position="1"/>
        <end position="86"/>
    </location>
</feature>
<gene>
    <name evidence="1" type="primary">rpmA</name>
    <name type="ordered locus">XC_3092</name>
</gene>
<keyword id="KW-0687">Ribonucleoprotein</keyword>
<keyword id="KW-0689">Ribosomal protein</keyword>